<dbReference type="EMBL" id="HE601467">
    <property type="protein sequence ID" value="CAP32667.2"/>
    <property type="molecule type" value="Genomic_DNA"/>
</dbReference>
<dbReference type="SMR" id="A8XJ40"/>
<dbReference type="FunCoup" id="A8XJ40">
    <property type="interactions" value="2870"/>
</dbReference>
<dbReference type="STRING" id="6238.A8XJ40"/>
<dbReference type="EnsemblMetazoa" id="CBG13889.1">
    <property type="protein sequence ID" value="CBG13889.1"/>
    <property type="gene ID" value="WBGene00034572"/>
</dbReference>
<dbReference type="WormBase" id="CBG13889">
    <property type="protein sequence ID" value="CBP30374"/>
    <property type="gene ID" value="WBGene00034572"/>
    <property type="gene designation" value="Cbr-npp-20"/>
</dbReference>
<dbReference type="eggNOG" id="KOG1332">
    <property type="taxonomic scope" value="Eukaryota"/>
</dbReference>
<dbReference type="HOGENOM" id="CLU_032441_0_1_1"/>
<dbReference type="InParanoid" id="A8XJ40"/>
<dbReference type="OMA" id="IWKEEGD"/>
<dbReference type="OrthoDB" id="364224at2759"/>
<dbReference type="Proteomes" id="UP000008549">
    <property type="component" value="Unassembled WGS sequence"/>
</dbReference>
<dbReference type="GO" id="GO:0030127">
    <property type="term" value="C:COPII vesicle coat"/>
    <property type="evidence" value="ECO:0000318"/>
    <property type="project" value="GO_Central"/>
</dbReference>
<dbReference type="GO" id="GO:0005789">
    <property type="term" value="C:endoplasmic reticulum membrane"/>
    <property type="evidence" value="ECO:0007669"/>
    <property type="project" value="UniProtKB-SubCell"/>
</dbReference>
<dbReference type="GO" id="GO:0005765">
    <property type="term" value="C:lysosomal membrane"/>
    <property type="evidence" value="ECO:0007669"/>
    <property type="project" value="UniProtKB-SubCell"/>
</dbReference>
<dbReference type="GO" id="GO:0005643">
    <property type="term" value="C:nuclear pore"/>
    <property type="evidence" value="ECO:0000250"/>
    <property type="project" value="UniProtKB"/>
</dbReference>
<dbReference type="GO" id="GO:0031080">
    <property type="term" value="C:nuclear pore outer ring"/>
    <property type="evidence" value="ECO:0000318"/>
    <property type="project" value="GO_Central"/>
</dbReference>
<dbReference type="GO" id="GO:0005198">
    <property type="term" value="F:structural molecule activity"/>
    <property type="evidence" value="ECO:0000318"/>
    <property type="project" value="GO_Central"/>
</dbReference>
<dbReference type="GO" id="GO:0090114">
    <property type="term" value="P:COPII-coated vesicle budding"/>
    <property type="evidence" value="ECO:0000318"/>
    <property type="project" value="GO_Central"/>
</dbReference>
<dbReference type="GO" id="GO:0051028">
    <property type="term" value="P:mRNA transport"/>
    <property type="evidence" value="ECO:0007669"/>
    <property type="project" value="UniProtKB-KW"/>
</dbReference>
<dbReference type="GO" id="GO:0010973">
    <property type="term" value="P:positive regulation of division septum assembly"/>
    <property type="evidence" value="ECO:0000250"/>
    <property type="project" value="UniProtKB"/>
</dbReference>
<dbReference type="GO" id="GO:0032008">
    <property type="term" value="P:positive regulation of TOR signaling"/>
    <property type="evidence" value="ECO:0000318"/>
    <property type="project" value="GO_Central"/>
</dbReference>
<dbReference type="GO" id="GO:0032527">
    <property type="term" value="P:protein exit from endoplasmic reticulum"/>
    <property type="evidence" value="ECO:0000318"/>
    <property type="project" value="GO_Central"/>
</dbReference>
<dbReference type="GO" id="GO:0006606">
    <property type="term" value="P:protein import into nucleus"/>
    <property type="evidence" value="ECO:0000318"/>
    <property type="project" value="GO_Central"/>
</dbReference>
<dbReference type="FunFam" id="2.130.10.10:FF:001578">
    <property type="entry name" value="Protein SEC13 homolog"/>
    <property type="match status" value="1"/>
</dbReference>
<dbReference type="Gene3D" id="2.130.10.10">
    <property type="entry name" value="YVTN repeat-like/Quinoprotein amine dehydrogenase"/>
    <property type="match status" value="1"/>
</dbReference>
<dbReference type="InterPro" id="IPR037363">
    <property type="entry name" value="Sec13/Seh1_fam"/>
</dbReference>
<dbReference type="InterPro" id="IPR015943">
    <property type="entry name" value="WD40/YVTN_repeat-like_dom_sf"/>
</dbReference>
<dbReference type="InterPro" id="IPR036322">
    <property type="entry name" value="WD40_repeat_dom_sf"/>
</dbReference>
<dbReference type="InterPro" id="IPR001680">
    <property type="entry name" value="WD40_rpt"/>
</dbReference>
<dbReference type="PANTHER" id="PTHR11024">
    <property type="entry name" value="NUCLEAR PORE COMPLEX PROTEIN SEC13 / SEH1 FAMILY MEMBER"/>
    <property type="match status" value="1"/>
</dbReference>
<dbReference type="PANTHER" id="PTHR11024:SF2">
    <property type="entry name" value="PROTEIN SEC13 HOMOLOG"/>
    <property type="match status" value="1"/>
</dbReference>
<dbReference type="Pfam" id="PF00400">
    <property type="entry name" value="WD40"/>
    <property type="match status" value="5"/>
</dbReference>
<dbReference type="SMART" id="SM00320">
    <property type="entry name" value="WD40"/>
    <property type="match status" value="6"/>
</dbReference>
<dbReference type="SUPFAM" id="SSF50978">
    <property type="entry name" value="WD40 repeat-like"/>
    <property type="match status" value="1"/>
</dbReference>
<dbReference type="PROSITE" id="PS50082">
    <property type="entry name" value="WD_REPEATS_2"/>
    <property type="match status" value="1"/>
</dbReference>
<dbReference type="PROSITE" id="PS50294">
    <property type="entry name" value="WD_REPEATS_REGION"/>
    <property type="match status" value="1"/>
</dbReference>
<protein>
    <recommendedName>
        <fullName evidence="2">Protein SEC13 homolog</fullName>
        <shortName evidence="2">CeSEH13R</shortName>
    </recommendedName>
    <alternativeName>
        <fullName evidence="4">GATOR complex protein SEC13</fullName>
    </alternativeName>
    <alternativeName>
        <fullName evidence="2">Nuclear pore complex protein 20</fullName>
    </alternativeName>
</protein>
<evidence type="ECO:0000250" key="1">
    <source>
        <dbReference type="UniProtKB" id="P55735"/>
    </source>
</evidence>
<evidence type="ECO:0000250" key="2">
    <source>
        <dbReference type="UniProtKB" id="Q9N4A7"/>
    </source>
</evidence>
<evidence type="ECO:0000255" key="3"/>
<evidence type="ECO:0000305" key="4"/>
<evidence type="ECO:0000312" key="5">
    <source>
        <dbReference type="EMBL" id="CAP32667.2"/>
    </source>
</evidence>
<evidence type="ECO:0000312" key="6">
    <source>
        <dbReference type="WormBase" id="CBG13889"/>
    </source>
</evidence>
<keyword id="KW-0968">Cytoplasmic vesicle</keyword>
<keyword id="KW-0256">Endoplasmic reticulum</keyword>
<keyword id="KW-0931">ER-Golgi transport</keyword>
<keyword id="KW-0458">Lysosome</keyword>
<keyword id="KW-0472">Membrane</keyword>
<keyword id="KW-0509">mRNA transport</keyword>
<keyword id="KW-0906">Nuclear pore complex</keyword>
<keyword id="KW-0539">Nucleus</keyword>
<keyword id="KW-0653">Protein transport</keyword>
<keyword id="KW-1185">Reference proteome</keyword>
<keyword id="KW-0677">Repeat</keyword>
<keyword id="KW-0811">Translocation</keyword>
<keyword id="KW-0813">Transport</keyword>
<keyword id="KW-0853">WD repeat</keyword>
<comment type="function">
    <text evidence="1">Functions as a component of the nuclear pore complex (NPC) and the COPII coat.</text>
</comment>
<comment type="function">
    <text evidence="1">As a component of the GATOR complex may function in the amino acid-sensing branch of the TORC1 signaling pathway.</text>
</comment>
<comment type="subunit">
    <text evidence="1">Probably part of the GATOR complex.</text>
</comment>
<comment type="subcellular location">
    <subcellularLocation>
        <location evidence="1">Cytoplasmic vesicle</location>
        <location evidence="1">COPII-coated vesicle membrane</location>
        <topology evidence="1">Peripheral membrane protein</topology>
        <orientation evidence="1">Cytoplasmic side</orientation>
    </subcellularLocation>
    <subcellularLocation>
        <location evidence="1">Endoplasmic reticulum membrane</location>
        <topology evidence="1">Peripheral membrane protein</topology>
        <orientation evidence="1">Cytoplasmic side</orientation>
    </subcellularLocation>
    <subcellularLocation>
        <location evidence="1">Nucleus</location>
        <location evidence="1">Nuclear pore complex</location>
    </subcellularLocation>
    <subcellularLocation>
        <location evidence="1">Lysosome membrane</location>
    </subcellularLocation>
</comment>
<comment type="similarity">
    <text evidence="3">Belongs to the WD repeat SEC13 family.</text>
</comment>
<feature type="chain" id="PRO_0000405803" description="Protein SEC13 homolog">
    <location>
        <begin position="1"/>
        <end position="306"/>
    </location>
</feature>
<feature type="repeat" description="WD 1" evidence="3">
    <location>
        <begin position="11"/>
        <end position="50"/>
    </location>
</feature>
<feature type="repeat" description="WD 2" evidence="3">
    <location>
        <begin position="56"/>
        <end position="97"/>
    </location>
</feature>
<feature type="repeat" description="WD 3" evidence="3">
    <location>
        <begin position="102"/>
        <end position="143"/>
    </location>
</feature>
<feature type="repeat" description="WD 4" evidence="3">
    <location>
        <begin position="150"/>
        <end position="195"/>
    </location>
</feature>
<feature type="repeat" description="WD 5" evidence="3">
    <location>
        <begin position="202"/>
        <end position="245"/>
    </location>
</feature>
<feature type="repeat" description="WD 6" evidence="3">
    <location>
        <begin position="252"/>
        <end position="291"/>
    </location>
</feature>
<gene>
    <name evidence="6" type="primary">npp-20</name>
    <name type="ORF">CBG13889</name>
</gene>
<proteinExistence type="inferred from homology"/>
<accession>A8XJ40</accession>
<organism>
    <name type="scientific">Caenorhabditis briggsae</name>
    <dbReference type="NCBI Taxonomy" id="6238"/>
    <lineage>
        <taxon>Eukaryota</taxon>
        <taxon>Metazoa</taxon>
        <taxon>Ecdysozoa</taxon>
        <taxon>Nematoda</taxon>
        <taxon>Chromadorea</taxon>
        <taxon>Rhabditida</taxon>
        <taxon>Rhabditina</taxon>
        <taxon>Rhabditomorpha</taxon>
        <taxon>Rhabditoidea</taxon>
        <taxon>Rhabditidae</taxon>
        <taxon>Peloderinae</taxon>
        <taxon>Caenorhabditis</taxon>
    </lineage>
</organism>
<reference evidence="5" key="1">
    <citation type="journal article" date="2003" name="PLoS Biol.">
        <title>The genome sequence of Caenorhabditis briggsae: a platform for comparative genomics.</title>
        <authorList>
            <person name="Stein L.D."/>
            <person name="Bao Z."/>
            <person name="Blasiar D."/>
            <person name="Blumenthal T."/>
            <person name="Brent M.R."/>
            <person name="Chen N."/>
            <person name="Chinwalla A."/>
            <person name="Clarke L."/>
            <person name="Clee C."/>
            <person name="Coghlan A."/>
            <person name="Coulson A."/>
            <person name="D'Eustachio P."/>
            <person name="Fitch D.H.A."/>
            <person name="Fulton L.A."/>
            <person name="Fulton R.E."/>
            <person name="Griffiths-Jones S."/>
            <person name="Harris T.W."/>
            <person name="Hillier L.W."/>
            <person name="Kamath R."/>
            <person name="Kuwabara P.E."/>
            <person name="Mardis E.R."/>
            <person name="Marra M.A."/>
            <person name="Miner T.L."/>
            <person name="Minx P."/>
            <person name="Mullikin J.C."/>
            <person name="Plumb R.W."/>
            <person name="Rogers J."/>
            <person name="Schein J.E."/>
            <person name="Sohrmann M."/>
            <person name="Spieth J."/>
            <person name="Stajich J.E."/>
            <person name="Wei C."/>
            <person name="Willey D."/>
            <person name="Wilson R.K."/>
            <person name="Durbin R.M."/>
            <person name="Waterston R.H."/>
        </authorList>
    </citation>
    <scope>NUCLEOTIDE SEQUENCE [LARGE SCALE GENOMIC DNA]</scope>
    <source>
        <strain>AF16</strain>
    </source>
</reference>
<sequence>MTTIRQRIDTQHRDAIHDAQLNIYGNRLATCGSDRLVKIFEVRPNGQSYPLIELSGHNGPVWKVSWAHPKYGGLLASASYDKKVIIWQEVNGRWQKTYEWETHEASVTSVAFAPHQFGLMLASSSADGTIGILRFDAQTQQWQSSRIQNCHDQGVNSVSWAPGTADPAGKKRFVSAGNDKLVKIWLLNEELNEWTCEKAIHCHKDFVREAAWCPVTNKGQHSIVSCGLDGNLVLYRIADIETAEWKSKLLEQAPCALYHASFSPCGSFLSVSGDDNMITLWRENLQGQWIKIPRENKEREGMGQQR</sequence>
<name>SEC13_CAEBR</name>